<organism>
    <name type="scientific">Methanocaldococcus jannaschii (strain ATCC 43067 / DSM 2661 / JAL-1 / JCM 10045 / NBRC 100440)</name>
    <name type="common">Methanococcus jannaschii</name>
    <dbReference type="NCBI Taxonomy" id="243232"/>
    <lineage>
        <taxon>Archaea</taxon>
        <taxon>Methanobacteriati</taxon>
        <taxon>Methanobacteriota</taxon>
        <taxon>Methanomada group</taxon>
        <taxon>Methanococci</taxon>
        <taxon>Methanococcales</taxon>
        <taxon>Methanocaldococcaceae</taxon>
        <taxon>Methanocaldococcus</taxon>
    </lineage>
</organism>
<comment type="function">
    <text evidence="1">Catalyzes the transfer of a ribosyl phosphate group from 5-phosphoribose 1-diphosphate to orotate, leading to the formation of orotidine monophosphate (OMP).</text>
</comment>
<comment type="catalytic activity">
    <reaction evidence="1">
        <text>orotidine 5'-phosphate + diphosphate = orotate + 5-phospho-alpha-D-ribose 1-diphosphate</text>
        <dbReference type="Rhea" id="RHEA:10380"/>
        <dbReference type="ChEBI" id="CHEBI:30839"/>
        <dbReference type="ChEBI" id="CHEBI:33019"/>
        <dbReference type="ChEBI" id="CHEBI:57538"/>
        <dbReference type="ChEBI" id="CHEBI:58017"/>
        <dbReference type="EC" id="2.4.2.10"/>
    </reaction>
</comment>
<comment type="cofactor">
    <cofactor evidence="1">
        <name>Mg(2+)</name>
        <dbReference type="ChEBI" id="CHEBI:18420"/>
    </cofactor>
</comment>
<comment type="pathway">
    <text evidence="1">Pyrimidine metabolism; UMP biosynthesis via de novo pathway; UMP from orotate: step 1/2.</text>
</comment>
<comment type="subunit">
    <text evidence="1">Homodimer.</text>
</comment>
<comment type="similarity">
    <text evidence="1">Belongs to the purine/pyrimidine phosphoribosyltransferase family. PyrE subfamily.</text>
</comment>
<gene>
    <name evidence="1" type="primary">pyrE</name>
    <name type="ordered locus">MJ1109</name>
</gene>
<name>PYRE_METJA</name>
<feature type="chain" id="PRO_0000110779" description="Orotate phosphoribosyltransferase">
    <location>
        <begin position="1"/>
        <end position="176"/>
    </location>
</feature>
<feature type="binding site" evidence="1">
    <location>
        <position position="90"/>
    </location>
    <ligand>
        <name>5-phospho-alpha-D-ribose 1-diphosphate</name>
        <dbReference type="ChEBI" id="CHEBI:58017"/>
        <note>ligand shared between dimeric partners</note>
    </ligand>
</feature>
<feature type="binding site" description="in other chain" evidence="1">
    <location>
        <position position="91"/>
    </location>
    <ligand>
        <name>5-phospho-alpha-D-ribose 1-diphosphate</name>
        <dbReference type="ChEBI" id="CHEBI:58017"/>
        <note>ligand shared between dimeric partners</note>
    </ligand>
</feature>
<feature type="binding site" evidence="1">
    <location>
        <position position="94"/>
    </location>
    <ligand>
        <name>5-phospho-alpha-D-ribose 1-diphosphate</name>
        <dbReference type="ChEBI" id="CHEBI:58017"/>
        <note>ligand shared between dimeric partners</note>
    </ligand>
</feature>
<feature type="binding site" description="in other chain" evidence="1">
    <location>
        <begin position="116"/>
        <end position="124"/>
    </location>
    <ligand>
        <name>5-phospho-alpha-D-ribose 1-diphosphate</name>
        <dbReference type="ChEBI" id="CHEBI:58017"/>
        <note>ligand shared between dimeric partners</note>
    </ligand>
</feature>
<feature type="binding site" evidence="1">
    <location>
        <position position="120"/>
    </location>
    <ligand>
        <name>orotate</name>
        <dbReference type="ChEBI" id="CHEBI:30839"/>
    </ligand>
</feature>
<feature type="binding site" evidence="1">
    <location>
        <position position="148"/>
    </location>
    <ligand>
        <name>orotate</name>
        <dbReference type="ChEBI" id="CHEBI:30839"/>
    </ligand>
</feature>
<keyword id="KW-0328">Glycosyltransferase</keyword>
<keyword id="KW-0460">Magnesium</keyword>
<keyword id="KW-0665">Pyrimidine biosynthesis</keyword>
<keyword id="KW-1185">Reference proteome</keyword>
<keyword id="KW-0808">Transferase</keyword>
<protein>
    <recommendedName>
        <fullName evidence="1">Orotate phosphoribosyltransferase</fullName>
        <shortName evidence="1">OPRT</shortName>
        <shortName evidence="1">OPRTase</shortName>
        <ecNumber evidence="1">2.4.2.10</ecNumber>
    </recommendedName>
</protein>
<proteinExistence type="inferred from homology"/>
<reference key="1">
    <citation type="journal article" date="1996" name="Science">
        <title>Complete genome sequence of the methanogenic archaeon, Methanococcus jannaschii.</title>
        <authorList>
            <person name="Bult C.J."/>
            <person name="White O."/>
            <person name="Olsen G.J."/>
            <person name="Zhou L."/>
            <person name="Fleischmann R.D."/>
            <person name="Sutton G.G."/>
            <person name="Blake J.A."/>
            <person name="FitzGerald L.M."/>
            <person name="Clayton R.A."/>
            <person name="Gocayne J.D."/>
            <person name="Kerlavage A.R."/>
            <person name="Dougherty B.A."/>
            <person name="Tomb J.-F."/>
            <person name="Adams M.D."/>
            <person name="Reich C.I."/>
            <person name="Overbeek R."/>
            <person name="Kirkness E.F."/>
            <person name="Weinstock K.G."/>
            <person name="Merrick J.M."/>
            <person name="Glodek A."/>
            <person name="Scott J.L."/>
            <person name="Geoghagen N.S.M."/>
            <person name="Weidman J.F."/>
            <person name="Fuhrmann J.L."/>
            <person name="Nguyen D."/>
            <person name="Utterback T.R."/>
            <person name="Kelley J.M."/>
            <person name="Peterson J.D."/>
            <person name="Sadow P.W."/>
            <person name="Hanna M.C."/>
            <person name="Cotton M.D."/>
            <person name="Roberts K.M."/>
            <person name="Hurst M.A."/>
            <person name="Kaine B.P."/>
            <person name="Borodovsky M."/>
            <person name="Klenk H.-P."/>
            <person name="Fraser C.M."/>
            <person name="Smith H.O."/>
            <person name="Woese C.R."/>
            <person name="Venter J.C."/>
        </authorList>
    </citation>
    <scope>NUCLEOTIDE SEQUENCE [LARGE SCALE GENOMIC DNA]</scope>
    <source>
        <strain>ATCC 43067 / DSM 2661 / JAL-1 / JCM 10045 / NBRC 100440</strain>
    </source>
</reference>
<sequence>MDKKSKLINLLKEVGCIRFGEFILASGKKSNYYIDIKKATTNPEILKLVGEIIAEQIKDEDVKVAGVELGSVPIATAVSIIAQKPLLIVRKKPKDYGTKNKIEGELKEGDKVVIVEDVTTTGGSVLKAVKEIRENGGIVDKVFVVVDRLEGAKENLQKENVELIPLVTVKELQSTQ</sequence>
<accession>Q58509</accession>
<evidence type="ECO:0000255" key="1">
    <source>
        <dbReference type="HAMAP-Rule" id="MF_01208"/>
    </source>
</evidence>
<dbReference type="EC" id="2.4.2.10" evidence="1"/>
<dbReference type="EMBL" id="L77117">
    <property type="protein sequence ID" value="AAB99112.1"/>
    <property type="molecule type" value="Genomic_DNA"/>
</dbReference>
<dbReference type="PIR" id="D64438">
    <property type="entry name" value="D64438"/>
</dbReference>
<dbReference type="RefSeq" id="WP_010870621.1">
    <property type="nucleotide sequence ID" value="NC_000909.1"/>
</dbReference>
<dbReference type="SMR" id="Q58509"/>
<dbReference type="FunCoup" id="Q58509">
    <property type="interactions" value="154"/>
</dbReference>
<dbReference type="STRING" id="243232.MJ_1109"/>
<dbReference type="PaxDb" id="243232-MJ_1109"/>
<dbReference type="EnsemblBacteria" id="AAB99112">
    <property type="protein sequence ID" value="AAB99112"/>
    <property type="gene ID" value="MJ_1109"/>
</dbReference>
<dbReference type="GeneID" id="1452006"/>
<dbReference type="KEGG" id="mja:MJ_1109"/>
<dbReference type="eggNOG" id="arCOG00029">
    <property type="taxonomic scope" value="Archaea"/>
</dbReference>
<dbReference type="HOGENOM" id="CLU_074878_2_0_2"/>
<dbReference type="InParanoid" id="Q58509"/>
<dbReference type="OrthoDB" id="9089at2157"/>
<dbReference type="PhylomeDB" id="Q58509"/>
<dbReference type="UniPathway" id="UPA00070">
    <property type="reaction ID" value="UER00119"/>
</dbReference>
<dbReference type="Proteomes" id="UP000000805">
    <property type="component" value="Chromosome"/>
</dbReference>
<dbReference type="GO" id="GO:0000287">
    <property type="term" value="F:magnesium ion binding"/>
    <property type="evidence" value="ECO:0007669"/>
    <property type="project" value="UniProtKB-UniRule"/>
</dbReference>
<dbReference type="GO" id="GO:0004588">
    <property type="term" value="F:orotate phosphoribosyltransferase activity"/>
    <property type="evidence" value="ECO:0000318"/>
    <property type="project" value="GO_Central"/>
</dbReference>
<dbReference type="GO" id="GO:0044205">
    <property type="term" value="P:'de novo' UMP biosynthetic process"/>
    <property type="evidence" value="ECO:0007669"/>
    <property type="project" value="UniProtKB-UniRule"/>
</dbReference>
<dbReference type="GO" id="GO:0019856">
    <property type="term" value="P:pyrimidine nucleobase biosynthetic process"/>
    <property type="evidence" value="ECO:0000318"/>
    <property type="project" value="GO_Central"/>
</dbReference>
<dbReference type="GO" id="GO:0006222">
    <property type="term" value="P:UMP biosynthetic process"/>
    <property type="evidence" value="ECO:0000318"/>
    <property type="project" value="GO_Central"/>
</dbReference>
<dbReference type="CDD" id="cd06223">
    <property type="entry name" value="PRTases_typeI"/>
    <property type="match status" value="1"/>
</dbReference>
<dbReference type="FunFam" id="3.40.50.2020:FF:000029">
    <property type="entry name" value="Orotate phosphoribosyltransferase"/>
    <property type="match status" value="1"/>
</dbReference>
<dbReference type="Gene3D" id="3.40.50.2020">
    <property type="match status" value="1"/>
</dbReference>
<dbReference type="HAMAP" id="MF_01208">
    <property type="entry name" value="PyrE"/>
    <property type="match status" value="1"/>
</dbReference>
<dbReference type="InterPro" id="IPR023031">
    <property type="entry name" value="OPRT"/>
</dbReference>
<dbReference type="InterPro" id="IPR004467">
    <property type="entry name" value="Or_phspho_trans_dom"/>
</dbReference>
<dbReference type="InterPro" id="IPR000836">
    <property type="entry name" value="PRibTrfase_dom"/>
</dbReference>
<dbReference type="InterPro" id="IPR029057">
    <property type="entry name" value="PRTase-like"/>
</dbReference>
<dbReference type="NCBIfam" id="TIGR00336">
    <property type="entry name" value="pyrE"/>
    <property type="match status" value="1"/>
</dbReference>
<dbReference type="PANTHER" id="PTHR19278">
    <property type="entry name" value="OROTATE PHOSPHORIBOSYLTRANSFERASE"/>
    <property type="match status" value="1"/>
</dbReference>
<dbReference type="PANTHER" id="PTHR19278:SF9">
    <property type="entry name" value="URIDINE 5'-MONOPHOSPHATE SYNTHASE"/>
    <property type="match status" value="1"/>
</dbReference>
<dbReference type="Pfam" id="PF00156">
    <property type="entry name" value="Pribosyltran"/>
    <property type="match status" value="1"/>
</dbReference>
<dbReference type="SUPFAM" id="SSF53271">
    <property type="entry name" value="PRTase-like"/>
    <property type="match status" value="1"/>
</dbReference>